<feature type="chain" id="PRO_0000191767" description="Glycosylphosphatidylinositol anchor biosynthesis protein 11">
    <location>
        <begin position="1"/>
        <end position="217"/>
    </location>
</feature>
<feature type="transmembrane region" description="Helical" evidence="2">
    <location>
        <begin position="41"/>
        <end position="61"/>
    </location>
</feature>
<feature type="transmembrane region" description="Helical" evidence="2">
    <location>
        <begin position="66"/>
        <end position="86"/>
    </location>
</feature>
<feature type="transmembrane region" description="Helical" evidence="2">
    <location>
        <begin position="107"/>
        <end position="127"/>
    </location>
</feature>
<feature type="transmembrane region" description="Helical" evidence="2">
    <location>
        <begin position="139"/>
        <end position="159"/>
    </location>
</feature>
<feature type="transmembrane region" description="Helical" evidence="2">
    <location>
        <begin position="169"/>
        <end position="189"/>
    </location>
</feature>
<feature type="transmembrane region" description="Helical" evidence="2">
    <location>
        <begin position="197"/>
        <end position="217"/>
    </location>
</feature>
<feature type="glycosylation site" description="N-linked (GlcNAc...) asparagine" evidence="2">
    <location>
        <position position="20"/>
    </location>
</feature>
<accession>Q6CTT3</accession>
<proteinExistence type="inferred from homology"/>
<dbReference type="EMBL" id="CR382123">
    <property type="protein sequence ID" value="CAH01507.1"/>
    <property type="molecule type" value="Genomic_DNA"/>
</dbReference>
<dbReference type="RefSeq" id="XP_452656.1">
    <property type="nucleotide sequence ID" value="XM_452656.1"/>
</dbReference>
<dbReference type="FunCoup" id="Q6CTT3">
    <property type="interactions" value="165"/>
</dbReference>
<dbReference type="STRING" id="284590.Q6CTT3"/>
<dbReference type="GlyCosmos" id="Q6CTT3">
    <property type="glycosylation" value="1 site, No reported glycans"/>
</dbReference>
<dbReference type="PaxDb" id="284590-Q6CTT3"/>
<dbReference type="KEGG" id="kla:KLLA0_C10252g"/>
<dbReference type="eggNOG" id="KOG3144">
    <property type="taxonomic scope" value="Eukaryota"/>
</dbReference>
<dbReference type="HOGENOM" id="CLU_111662_0_0_1"/>
<dbReference type="InParanoid" id="Q6CTT3"/>
<dbReference type="OMA" id="FNCDFKV"/>
<dbReference type="UniPathway" id="UPA00196"/>
<dbReference type="Proteomes" id="UP000000598">
    <property type="component" value="Chromosome C"/>
</dbReference>
<dbReference type="GO" id="GO:0005789">
    <property type="term" value="C:endoplasmic reticulum membrane"/>
    <property type="evidence" value="ECO:0007669"/>
    <property type="project" value="UniProtKB-SubCell"/>
</dbReference>
<dbReference type="GO" id="GO:0006506">
    <property type="term" value="P:GPI anchor biosynthetic process"/>
    <property type="evidence" value="ECO:0007669"/>
    <property type="project" value="UniProtKB-UniPathway"/>
</dbReference>
<dbReference type="InterPro" id="IPR009580">
    <property type="entry name" value="GPI_biosynthesis_protein_Pig-F"/>
</dbReference>
<dbReference type="Pfam" id="PF06699">
    <property type="entry name" value="PIG-F"/>
    <property type="match status" value="1"/>
</dbReference>
<name>GPI11_KLULA</name>
<gene>
    <name type="primary">GPI11</name>
    <name type="ordered locus">KLLA0C10252g</name>
</gene>
<keyword id="KW-0256">Endoplasmic reticulum</keyword>
<keyword id="KW-0325">Glycoprotein</keyword>
<keyword id="KW-0337">GPI-anchor biosynthesis</keyword>
<keyword id="KW-0472">Membrane</keyword>
<keyword id="KW-1185">Reference proteome</keyword>
<keyword id="KW-0812">Transmembrane</keyword>
<keyword id="KW-1133">Transmembrane helix</keyword>
<organism>
    <name type="scientific">Kluyveromyces lactis (strain ATCC 8585 / CBS 2359 / DSM 70799 / NBRC 1267 / NRRL Y-1140 / WM37)</name>
    <name type="common">Yeast</name>
    <name type="synonym">Candida sphaerica</name>
    <dbReference type="NCBI Taxonomy" id="284590"/>
    <lineage>
        <taxon>Eukaryota</taxon>
        <taxon>Fungi</taxon>
        <taxon>Dikarya</taxon>
        <taxon>Ascomycota</taxon>
        <taxon>Saccharomycotina</taxon>
        <taxon>Saccharomycetes</taxon>
        <taxon>Saccharomycetales</taxon>
        <taxon>Saccharomycetaceae</taxon>
        <taxon>Kluyveromyces</taxon>
    </lineage>
</organism>
<evidence type="ECO:0000250" key="1"/>
<evidence type="ECO:0000255" key="2"/>
<evidence type="ECO:0000305" key="3"/>
<protein>
    <recommendedName>
        <fullName>Glycosylphosphatidylinositol anchor biosynthesis protein 11</fullName>
    </recommendedName>
</protein>
<reference key="1">
    <citation type="journal article" date="2004" name="Nature">
        <title>Genome evolution in yeasts.</title>
        <authorList>
            <person name="Dujon B."/>
            <person name="Sherman D."/>
            <person name="Fischer G."/>
            <person name="Durrens P."/>
            <person name="Casaregola S."/>
            <person name="Lafontaine I."/>
            <person name="de Montigny J."/>
            <person name="Marck C."/>
            <person name="Neuveglise C."/>
            <person name="Talla E."/>
            <person name="Goffard N."/>
            <person name="Frangeul L."/>
            <person name="Aigle M."/>
            <person name="Anthouard V."/>
            <person name="Babour A."/>
            <person name="Barbe V."/>
            <person name="Barnay S."/>
            <person name="Blanchin S."/>
            <person name="Beckerich J.-M."/>
            <person name="Beyne E."/>
            <person name="Bleykasten C."/>
            <person name="Boisrame A."/>
            <person name="Boyer J."/>
            <person name="Cattolico L."/>
            <person name="Confanioleri F."/>
            <person name="de Daruvar A."/>
            <person name="Despons L."/>
            <person name="Fabre E."/>
            <person name="Fairhead C."/>
            <person name="Ferry-Dumazet H."/>
            <person name="Groppi A."/>
            <person name="Hantraye F."/>
            <person name="Hennequin C."/>
            <person name="Jauniaux N."/>
            <person name="Joyet P."/>
            <person name="Kachouri R."/>
            <person name="Kerrest A."/>
            <person name="Koszul R."/>
            <person name="Lemaire M."/>
            <person name="Lesur I."/>
            <person name="Ma L."/>
            <person name="Muller H."/>
            <person name="Nicaud J.-M."/>
            <person name="Nikolski M."/>
            <person name="Oztas S."/>
            <person name="Ozier-Kalogeropoulos O."/>
            <person name="Pellenz S."/>
            <person name="Potier S."/>
            <person name="Richard G.-F."/>
            <person name="Straub M.-L."/>
            <person name="Suleau A."/>
            <person name="Swennen D."/>
            <person name="Tekaia F."/>
            <person name="Wesolowski-Louvel M."/>
            <person name="Westhof E."/>
            <person name="Wirth B."/>
            <person name="Zeniou-Meyer M."/>
            <person name="Zivanovic Y."/>
            <person name="Bolotin-Fukuhara M."/>
            <person name="Thierry A."/>
            <person name="Bouchier C."/>
            <person name="Caudron B."/>
            <person name="Scarpelli C."/>
            <person name="Gaillardin C."/>
            <person name="Weissenbach J."/>
            <person name="Wincker P."/>
            <person name="Souciet J.-L."/>
        </authorList>
    </citation>
    <scope>NUCLEOTIDE SEQUENCE [LARGE SCALE GENOMIC DNA]</scope>
    <source>
        <strain>ATCC 8585 / CBS 2359 / DSM 70799 / NBRC 1267 / NRRL Y-1140 / WM37</strain>
    </source>
</reference>
<sequence length="217" mass="25306">MHNRKRKTVKKTVSFSDDQNLTNANLNNHRKGHIDDDTPPVYVRKSWTLIPFHLLALLYWFLKYTDFNLLALLYIMIPTQVIYLIFRFNKNTIYGKKRLRLNWLLVFITLGACLLLSIPCLAIIVLFGAPFVELLKESWLLALHCCFLTYPAVYDVFNCNFKVGYFKKYFISVVIGCWISCFVIPLDWDRDWQAWPVPLIVGAYLGSFIGFSIGGYI</sequence>
<comment type="function">
    <text evidence="1">Acts in the GPI biosynthetic pathway between GlcNAc-PI synthesis and GPI transfer to protein.</text>
</comment>
<comment type="pathway">
    <text>Glycolipid biosynthesis; glycosylphosphatidylinositol-anchor biosynthesis.</text>
</comment>
<comment type="subcellular location">
    <subcellularLocation>
        <location evidence="1">Endoplasmic reticulum membrane</location>
        <topology evidence="1">Multi-pass membrane protein</topology>
    </subcellularLocation>
</comment>
<comment type="similarity">
    <text evidence="3">Belongs to the PIGF family.</text>
</comment>